<comment type="function">
    <text evidence="1">Allows the formation of correctly charged Asn-tRNA(Asn) or Gln-tRNA(Gln) through the transamidation of misacylated Asp-tRNA(Asn) or Glu-tRNA(Gln) in organisms which lack either or both of asparaginyl-tRNA or glutaminyl-tRNA synthetases. The reaction takes place in the presence of glutamine and ATP through an activated phospho-Asp-tRNA(Asn) or phospho-Glu-tRNA(Gln).</text>
</comment>
<comment type="catalytic activity">
    <reaction evidence="1">
        <text>L-glutamyl-tRNA(Gln) + L-glutamine + ATP + H2O = L-glutaminyl-tRNA(Gln) + L-glutamate + ADP + phosphate + H(+)</text>
        <dbReference type="Rhea" id="RHEA:17521"/>
        <dbReference type="Rhea" id="RHEA-COMP:9681"/>
        <dbReference type="Rhea" id="RHEA-COMP:9684"/>
        <dbReference type="ChEBI" id="CHEBI:15377"/>
        <dbReference type="ChEBI" id="CHEBI:15378"/>
        <dbReference type="ChEBI" id="CHEBI:29985"/>
        <dbReference type="ChEBI" id="CHEBI:30616"/>
        <dbReference type="ChEBI" id="CHEBI:43474"/>
        <dbReference type="ChEBI" id="CHEBI:58359"/>
        <dbReference type="ChEBI" id="CHEBI:78520"/>
        <dbReference type="ChEBI" id="CHEBI:78521"/>
        <dbReference type="ChEBI" id="CHEBI:456216"/>
    </reaction>
</comment>
<comment type="catalytic activity">
    <reaction evidence="1">
        <text>L-aspartyl-tRNA(Asn) + L-glutamine + ATP + H2O = L-asparaginyl-tRNA(Asn) + L-glutamate + ADP + phosphate + 2 H(+)</text>
        <dbReference type="Rhea" id="RHEA:14513"/>
        <dbReference type="Rhea" id="RHEA-COMP:9674"/>
        <dbReference type="Rhea" id="RHEA-COMP:9677"/>
        <dbReference type="ChEBI" id="CHEBI:15377"/>
        <dbReference type="ChEBI" id="CHEBI:15378"/>
        <dbReference type="ChEBI" id="CHEBI:29985"/>
        <dbReference type="ChEBI" id="CHEBI:30616"/>
        <dbReference type="ChEBI" id="CHEBI:43474"/>
        <dbReference type="ChEBI" id="CHEBI:58359"/>
        <dbReference type="ChEBI" id="CHEBI:78515"/>
        <dbReference type="ChEBI" id="CHEBI:78516"/>
        <dbReference type="ChEBI" id="CHEBI:456216"/>
    </reaction>
</comment>
<comment type="subunit">
    <text evidence="1">Heterotrimer of A, B and C subunits.</text>
</comment>
<comment type="similarity">
    <text evidence="1">Belongs to the GatC family.</text>
</comment>
<evidence type="ECO:0000255" key="1">
    <source>
        <dbReference type="HAMAP-Rule" id="MF_00122"/>
    </source>
</evidence>
<gene>
    <name evidence="1" type="primary">gatC</name>
    <name type="ordered locus">BALH_0312</name>
</gene>
<proteinExistence type="inferred from homology"/>
<sequence length="96" mass="10866">MSRISVENVKHVAHLARLAITDQEAEKFQKQLDAIVTFAEQLNELDTTDVKPTTHVLTMKNVMREDVPEKGLPVEEVLKNAPDHKDNQIRVPAVLE</sequence>
<accession>A0R920</accession>
<protein>
    <recommendedName>
        <fullName evidence="1">Aspartyl/glutamyl-tRNA(Asn/Gln) amidotransferase subunit C</fullName>
        <shortName evidence="1">Asp/Glu-ADT subunit C</shortName>
        <ecNumber evidence="1">6.3.5.-</ecNumber>
    </recommendedName>
</protein>
<keyword id="KW-0067">ATP-binding</keyword>
<keyword id="KW-0436">Ligase</keyword>
<keyword id="KW-0547">Nucleotide-binding</keyword>
<keyword id="KW-0648">Protein biosynthesis</keyword>
<organism>
    <name type="scientific">Bacillus thuringiensis (strain Al Hakam)</name>
    <dbReference type="NCBI Taxonomy" id="412694"/>
    <lineage>
        <taxon>Bacteria</taxon>
        <taxon>Bacillati</taxon>
        <taxon>Bacillota</taxon>
        <taxon>Bacilli</taxon>
        <taxon>Bacillales</taxon>
        <taxon>Bacillaceae</taxon>
        <taxon>Bacillus</taxon>
        <taxon>Bacillus cereus group</taxon>
    </lineage>
</organism>
<dbReference type="EC" id="6.3.5.-" evidence="1"/>
<dbReference type="EMBL" id="CP000485">
    <property type="protein sequence ID" value="ABK83713.1"/>
    <property type="molecule type" value="Genomic_DNA"/>
</dbReference>
<dbReference type="RefSeq" id="WP_000086999.1">
    <property type="nucleotide sequence ID" value="NC_008600.1"/>
</dbReference>
<dbReference type="SMR" id="A0R920"/>
<dbReference type="GeneID" id="93010705"/>
<dbReference type="KEGG" id="btl:BALH_0312"/>
<dbReference type="HOGENOM" id="CLU_105899_6_1_9"/>
<dbReference type="GO" id="GO:0050566">
    <property type="term" value="F:asparaginyl-tRNA synthase (glutamine-hydrolyzing) activity"/>
    <property type="evidence" value="ECO:0007669"/>
    <property type="project" value="RHEA"/>
</dbReference>
<dbReference type="GO" id="GO:0005524">
    <property type="term" value="F:ATP binding"/>
    <property type="evidence" value="ECO:0007669"/>
    <property type="project" value="UniProtKB-KW"/>
</dbReference>
<dbReference type="GO" id="GO:0050567">
    <property type="term" value="F:glutaminyl-tRNA synthase (glutamine-hydrolyzing) activity"/>
    <property type="evidence" value="ECO:0007669"/>
    <property type="project" value="UniProtKB-UniRule"/>
</dbReference>
<dbReference type="GO" id="GO:0070681">
    <property type="term" value="P:glutaminyl-tRNAGln biosynthesis via transamidation"/>
    <property type="evidence" value="ECO:0007669"/>
    <property type="project" value="TreeGrafter"/>
</dbReference>
<dbReference type="GO" id="GO:0006450">
    <property type="term" value="P:regulation of translational fidelity"/>
    <property type="evidence" value="ECO:0007669"/>
    <property type="project" value="InterPro"/>
</dbReference>
<dbReference type="GO" id="GO:0006412">
    <property type="term" value="P:translation"/>
    <property type="evidence" value="ECO:0007669"/>
    <property type="project" value="UniProtKB-UniRule"/>
</dbReference>
<dbReference type="Gene3D" id="1.10.20.60">
    <property type="entry name" value="Glu-tRNAGln amidotransferase C subunit, N-terminal domain"/>
    <property type="match status" value="1"/>
</dbReference>
<dbReference type="HAMAP" id="MF_00122">
    <property type="entry name" value="GatC"/>
    <property type="match status" value="1"/>
</dbReference>
<dbReference type="InterPro" id="IPR036113">
    <property type="entry name" value="Asp/Glu-ADT_sf_sub_c"/>
</dbReference>
<dbReference type="InterPro" id="IPR003837">
    <property type="entry name" value="GatC"/>
</dbReference>
<dbReference type="NCBIfam" id="TIGR00135">
    <property type="entry name" value="gatC"/>
    <property type="match status" value="1"/>
</dbReference>
<dbReference type="PANTHER" id="PTHR15004">
    <property type="entry name" value="GLUTAMYL-TRNA(GLN) AMIDOTRANSFERASE SUBUNIT C, MITOCHONDRIAL"/>
    <property type="match status" value="1"/>
</dbReference>
<dbReference type="PANTHER" id="PTHR15004:SF0">
    <property type="entry name" value="GLUTAMYL-TRNA(GLN) AMIDOTRANSFERASE SUBUNIT C, MITOCHONDRIAL"/>
    <property type="match status" value="1"/>
</dbReference>
<dbReference type="Pfam" id="PF02686">
    <property type="entry name" value="GatC"/>
    <property type="match status" value="1"/>
</dbReference>
<dbReference type="SUPFAM" id="SSF141000">
    <property type="entry name" value="Glu-tRNAGln amidotransferase C subunit"/>
    <property type="match status" value="1"/>
</dbReference>
<feature type="chain" id="PRO_1000016067" description="Aspartyl/glutamyl-tRNA(Asn/Gln) amidotransferase subunit C">
    <location>
        <begin position="1"/>
        <end position="96"/>
    </location>
</feature>
<name>GATC_BACAH</name>
<reference key="1">
    <citation type="journal article" date="2007" name="J. Bacteriol.">
        <title>The complete genome sequence of Bacillus thuringiensis Al Hakam.</title>
        <authorList>
            <person name="Challacombe J.F."/>
            <person name="Altherr M.R."/>
            <person name="Xie G."/>
            <person name="Bhotika S.S."/>
            <person name="Brown N."/>
            <person name="Bruce D."/>
            <person name="Campbell C.S."/>
            <person name="Campbell M.L."/>
            <person name="Chen J."/>
            <person name="Chertkov O."/>
            <person name="Cleland C."/>
            <person name="Dimitrijevic M."/>
            <person name="Doggett N.A."/>
            <person name="Fawcett J.J."/>
            <person name="Glavina T."/>
            <person name="Goodwin L.A."/>
            <person name="Green L.D."/>
            <person name="Han C.S."/>
            <person name="Hill K.K."/>
            <person name="Hitchcock P."/>
            <person name="Jackson P.J."/>
            <person name="Keim P."/>
            <person name="Kewalramani A.R."/>
            <person name="Longmire J."/>
            <person name="Lucas S."/>
            <person name="Malfatti S."/>
            <person name="Martinez D."/>
            <person name="McMurry K."/>
            <person name="Meincke L.J."/>
            <person name="Misra M."/>
            <person name="Moseman B.L."/>
            <person name="Mundt M."/>
            <person name="Munk A.C."/>
            <person name="Okinaka R.T."/>
            <person name="Parson-Quintana B."/>
            <person name="Reilly L.P."/>
            <person name="Richardson P."/>
            <person name="Robinson D.L."/>
            <person name="Saunders E."/>
            <person name="Tapia R."/>
            <person name="Tesmer J.G."/>
            <person name="Thayer N."/>
            <person name="Thompson L.S."/>
            <person name="Tice H."/>
            <person name="Ticknor L.O."/>
            <person name="Wills P.L."/>
            <person name="Gilna P."/>
            <person name="Brettin T.S."/>
        </authorList>
    </citation>
    <scope>NUCLEOTIDE SEQUENCE [LARGE SCALE GENOMIC DNA]</scope>
    <source>
        <strain>Al Hakam</strain>
    </source>
</reference>